<protein>
    <recommendedName>
        <fullName evidence="1">Cell division protein FtsQ</fullName>
    </recommendedName>
</protein>
<dbReference type="EMBL" id="FR845719">
    <property type="protein sequence ID" value="CCA55025.1"/>
    <property type="molecule type" value="Genomic_DNA"/>
</dbReference>
<dbReference type="RefSeq" id="WP_015032943.1">
    <property type="nucleotide sequence ID" value="NZ_JABVZO010000091.1"/>
</dbReference>
<dbReference type="SMR" id="F2RI42"/>
<dbReference type="STRING" id="953739.SVEN_1738"/>
<dbReference type="KEGG" id="sve:SVEN_1738"/>
<dbReference type="PATRIC" id="fig|953739.5.peg.3847"/>
<dbReference type="eggNOG" id="COG1589">
    <property type="taxonomic scope" value="Bacteria"/>
</dbReference>
<dbReference type="HOGENOM" id="CLU_047677_1_0_11"/>
<dbReference type="OrthoDB" id="9790760at2"/>
<dbReference type="Proteomes" id="UP000006854">
    <property type="component" value="Chromosome"/>
</dbReference>
<dbReference type="GO" id="GO:0032153">
    <property type="term" value="C:cell division site"/>
    <property type="evidence" value="ECO:0007669"/>
    <property type="project" value="UniProtKB-UniRule"/>
</dbReference>
<dbReference type="GO" id="GO:0005886">
    <property type="term" value="C:plasma membrane"/>
    <property type="evidence" value="ECO:0007669"/>
    <property type="project" value="UniProtKB-SubCell"/>
</dbReference>
<dbReference type="GO" id="GO:0090529">
    <property type="term" value="P:cell septum assembly"/>
    <property type="evidence" value="ECO:0007669"/>
    <property type="project" value="InterPro"/>
</dbReference>
<dbReference type="GO" id="GO:0043093">
    <property type="term" value="P:FtsZ-dependent cytokinesis"/>
    <property type="evidence" value="ECO:0007669"/>
    <property type="project" value="UniProtKB-UniRule"/>
</dbReference>
<dbReference type="Gene3D" id="3.10.20.310">
    <property type="entry name" value="membrane protein fhac"/>
    <property type="match status" value="1"/>
</dbReference>
<dbReference type="HAMAP" id="MF_00911">
    <property type="entry name" value="FtsQ_subfam"/>
    <property type="match status" value="1"/>
</dbReference>
<dbReference type="InterPro" id="IPR026579">
    <property type="entry name" value="FtsQ"/>
</dbReference>
<dbReference type="InterPro" id="IPR050487">
    <property type="entry name" value="FtsQ_DivIB"/>
</dbReference>
<dbReference type="InterPro" id="IPR034746">
    <property type="entry name" value="POTRA"/>
</dbReference>
<dbReference type="InterPro" id="IPR013685">
    <property type="entry name" value="POTRA_FtsQ_type"/>
</dbReference>
<dbReference type="PANTHER" id="PTHR37820">
    <property type="entry name" value="CELL DIVISION PROTEIN DIVIB"/>
    <property type="match status" value="1"/>
</dbReference>
<dbReference type="PANTHER" id="PTHR37820:SF1">
    <property type="entry name" value="CELL DIVISION PROTEIN FTSQ"/>
    <property type="match status" value="1"/>
</dbReference>
<dbReference type="Pfam" id="PF08478">
    <property type="entry name" value="POTRA_1"/>
    <property type="match status" value="1"/>
</dbReference>
<dbReference type="PROSITE" id="PS51779">
    <property type="entry name" value="POTRA"/>
    <property type="match status" value="1"/>
</dbReference>
<sequence>MAAGPTTAEKSGASGAKRSSKGSSDGPSRPGTRNRKFRMPGTRALLITLGVLLLVAGGLWALYGSTWFRVERVKTSGTSVLTPREVEAAAAVPLGAPLVTVDTDAIEARIRKELPRVDSVDVVRSWPHGIGLKVTERKPVLLIEKGGKFIEVDATGMRFATVDTAPRNVPRLVLDSASSPSLRRFDADRLLQEAVGVRGELPAEIARDTRVVRITSYDSVTLELTRGRTVFWGSGEHGAVKARVLTALLKATPKAGHFDVSAPTAPASSGS</sequence>
<evidence type="ECO:0000255" key="1">
    <source>
        <dbReference type="HAMAP-Rule" id="MF_00911"/>
    </source>
</evidence>
<evidence type="ECO:0000255" key="2">
    <source>
        <dbReference type="PROSITE-ProRule" id="PRU01115"/>
    </source>
</evidence>
<evidence type="ECO:0000256" key="3">
    <source>
        <dbReference type="SAM" id="MobiDB-lite"/>
    </source>
</evidence>
<gene>
    <name evidence="1" type="primary">ftsQ</name>
    <name type="ordered locus">SVEN_1738</name>
</gene>
<proteinExistence type="inferred from homology"/>
<keyword id="KW-0131">Cell cycle</keyword>
<keyword id="KW-0132">Cell division</keyword>
<keyword id="KW-1003">Cell membrane</keyword>
<keyword id="KW-0472">Membrane</keyword>
<keyword id="KW-1185">Reference proteome</keyword>
<keyword id="KW-0812">Transmembrane</keyword>
<keyword id="KW-1133">Transmembrane helix</keyword>
<reference key="1">
    <citation type="journal article" date="2011" name="BMC Genomics">
        <title>Genome-wide analysis of the role of GlnR in Streptomyces venezuelae provides new insights into global nitrogen regulation in actinomycetes.</title>
        <authorList>
            <person name="Pullan S.T."/>
            <person name="Chandra G."/>
            <person name="Bibb M.J."/>
            <person name="Merrick M."/>
        </authorList>
    </citation>
    <scope>NUCLEOTIDE SEQUENCE [LARGE SCALE GENOMIC DNA]</scope>
    <source>
        <strain>ATCC 10712 / CBS 650.69 / DSM 40230 / JCM 4526 / NBRC 13096 / PD 04745</strain>
    </source>
</reference>
<name>FTSQ_STRVP</name>
<accession>F2RI42</accession>
<comment type="function">
    <text evidence="1">Essential cell division protein.</text>
</comment>
<comment type="subcellular location">
    <subcellularLocation>
        <location evidence="1">Cell membrane</location>
        <topology evidence="1">Single-pass type II membrane protein</topology>
    </subcellularLocation>
    <text evidence="1">Localizes to the division septum.</text>
</comment>
<comment type="similarity">
    <text evidence="1">Belongs to the FtsQ/DivIB family. FtsQ subfamily.</text>
</comment>
<feature type="chain" id="PRO_0000414697" description="Cell division protein FtsQ">
    <location>
        <begin position="1"/>
        <end position="271"/>
    </location>
</feature>
<feature type="topological domain" description="Cytoplasmic" evidence="1">
    <location>
        <begin position="1"/>
        <end position="43"/>
    </location>
</feature>
<feature type="transmembrane region" description="Helical" evidence="1">
    <location>
        <begin position="44"/>
        <end position="64"/>
    </location>
</feature>
<feature type="topological domain" description="Extracellular" evidence="1">
    <location>
        <begin position="65"/>
        <end position="271"/>
    </location>
</feature>
<feature type="domain" description="POTRA" evidence="2">
    <location>
        <begin position="68"/>
        <end position="137"/>
    </location>
</feature>
<feature type="region of interest" description="Disordered" evidence="3">
    <location>
        <begin position="1"/>
        <end position="37"/>
    </location>
</feature>
<feature type="compositionally biased region" description="Low complexity" evidence="3">
    <location>
        <begin position="8"/>
        <end position="24"/>
    </location>
</feature>
<organism>
    <name type="scientific">Streptomyces venezuelae (strain ATCC 10712 / CBS 650.69 / DSM 40230 / JCM 4526 / NBRC 13096 / PD 04745)</name>
    <dbReference type="NCBI Taxonomy" id="953739"/>
    <lineage>
        <taxon>Bacteria</taxon>
        <taxon>Bacillati</taxon>
        <taxon>Actinomycetota</taxon>
        <taxon>Actinomycetes</taxon>
        <taxon>Kitasatosporales</taxon>
        <taxon>Streptomycetaceae</taxon>
        <taxon>Streptomyces</taxon>
    </lineage>
</organism>